<name>AMY_BACLI</name>
<feature type="signal peptide" evidence="9">
    <location>
        <begin position="1"/>
        <end position="29"/>
    </location>
</feature>
<feature type="chain" id="PRO_0000001332" description="Alpha-amylase">
    <location>
        <begin position="30"/>
        <end position="512"/>
    </location>
</feature>
<feature type="active site" description="Nucleophile">
    <location>
        <position position="260"/>
    </location>
</feature>
<feature type="active site" description="Proton donor">
    <location>
        <position position="290"/>
    </location>
</feature>
<feature type="binding site" evidence="4 11 13 14">
    <location>
        <position position="133"/>
    </location>
    <ligand>
        <name>Ca(2+)</name>
        <dbReference type="ChEBI" id="CHEBI:29108"/>
        <label>1</label>
    </ligand>
</feature>
<feature type="binding site" evidence="4 11 13 14">
    <location>
        <position position="190"/>
    </location>
    <ligand>
        <name>Ca(2+)</name>
        <dbReference type="ChEBI" id="CHEBI:29108"/>
        <label>2</label>
    </ligand>
</feature>
<feature type="binding site" evidence="4 11">
    <location>
        <position position="190"/>
    </location>
    <ligand>
        <name>Na(+)</name>
        <dbReference type="ChEBI" id="CHEBI:29101"/>
    </ligand>
</feature>
<feature type="binding site" evidence="4 11 13 14">
    <location>
        <position position="210"/>
    </location>
    <ligand>
        <name>Ca(2+)</name>
        <dbReference type="ChEBI" id="CHEBI:29108"/>
        <label>2</label>
    </ligand>
</feature>
<feature type="binding site" evidence="4 11 13 14">
    <location>
        <position position="212"/>
    </location>
    <ligand>
        <name>Ca(2+)</name>
        <dbReference type="ChEBI" id="CHEBI:29108"/>
        <label>2</label>
    </ligand>
</feature>
<feature type="binding site" evidence="4 11">
    <location>
        <position position="212"/>
    </location>
    <ligand>
        <name>Na(+)</name>
        <dbReference type="ChEBI" id="CHEBI:29101"/>
    </ligand>
</feature>
<feature type="binding site" evidence="4 11 13 14">
    <location>
        <position position="223"/>
    </location>
    <ligand>
        <name>Ca(2+)</name>
        <dbReference type="ChEBI" id="CHEBI:29108"/>
        <label>1</label>
    </ligand>
</feature>
<feature type="binding site" evidence="4 11">
    <location>
        <position position="223"/>
    </location>
    <ligand>
        <name>Na(+)</name>
        <dbReference type="ChEBI" id="CHEBI:29101"/>
    </ligand>
</feature>
<feature type="binding site" evidence="4 11 13 14">
    <location>
        <position position="229"/>
    </location>
    <ligand>
        <name>Ca(2+)</name>
        <dbReference type="ChEBI" id="CHEBI:29108"/>
        <label>1</label>
    </ligand>
</feature>
<feature type="binding site" evidence="4 11">
    <location>
        <position position="229"/>
    </location>
    <ligand>
        <name>Na(+)</name>
        <dbReference type="ChEBI" id="CHEBI:29101"/>
    </ligand>
</feature>
<feature type="binding site" evidence="4 11 13 14">
    <location>
        <position position="231"/>
    </location>
    <ligand>
        <name>Ca(2+)</name>
        <dbReference type="ChEBI" id="CHEBI:29108"/>
        <label>2</label>
    </ligand>
</feature>
<feature type="binding site" evidence="4 11 13 14">
    <location>
        <position position="233"/>
    </location>
    <ligand>
        <name>Ca(2+)</name>
        <dbReference type="ChEBI" id="CHEBI:29108"/>
        <label>2</label>
    </ligand>
</feature>
<feature type="binding site" evidence="13 14">
    <location>
        <position position="264"/>
    </location>
    <ligand>
        <name>Ca(2+)</name>
        <dbReference type="ChEBI" id="CHEBI:29108"/>
        <label>1</label>
    </ligand>
</feature>
<feature type="binding site" evidence="4 11 13 14">
    <location>
        <position position="329"/>
    </location>
    <ligand>
        <name>Ca(2+)</name>
        <dbReference type="ChEBI" id="CHEBI:29108"/>
        <label>3</label>
    </ligand>
</feature>
<feature type="binding site" evidence="4 11 13 14">
    <location>
        <position position="331"/>
    </location>
    <ligand>
        <name>Ca(2+)</name>
        <dbReference type="ChEBI" id="CHEBI:29108"/>
        <label>3</label>
    </ligand>
</feature>
<feature type="binding site" evidence="4 11 13 14">
    <location>
        <position position="435"/>
    </location>
    <ligand>
        <name>Ca(2+)</name>
        <dbReference type="ChEBI" id="CHEBI:29108"/>
        <label>3</label>
    </ligand>
</feature>
<feature type="binding site" evidence="4 11 13 14">
    <location>
        <position position="436"/>
    </location>
    <ligand>
        <name>Ca(2+)</name>
        <dbReference type="ChEBI" id="CHEBI:29108"/>
        <label>3</label>
    </ligand>
</feature>
<feature type="binding site" evidence="4 11 13 14">
    <location>
        <position position="459"/>
    </location>
    <ligand>
        <name>Ca(2+)</name>
        <dbReference type="ChEBI" id="CHEBI:29108"/>
        <label>3</label>
    </ligand>
</feature>
<feature type="site" description="Transition state stabilizer" evidence="1">
    <location>
        <position position="357"/>
    </location>
</feature>
<feature type="mutagenesis site" description="No effect on thermostability." evidence="8">
    <original>H</original>
    <variation>X</variation>
    <location>
        <position position="64"/>
    </location>
</feature>
<feature type="mutagenesis site" description="Decrease in thermostability." evidence="2">
    <original>D</original>
    <variation>X</variation>
    <location>
        <position position="150"/>
    </location>
</feature>
<feature type="mutagenesis site" description="Decrease in thermostability." evidence="2">
    <original>N</original>
    <variation>X</variation>
    <location>
        <position position="155"/>
    </location>
</feature>
<feature type="mutagenesis site" description="Increase in thermostability." evidence="8">
    <original>H</original>
    <variation>I</variation>
    <variation>V</variation>
    <location>
        <position position="162"/>
    </location>
</feature>
<feature type="mutagenesis site" description="Great decrease in thermostability." evidence="8">
    <original>H</original>
    <variation>P</variation>
    <location>
        <position position="162"/>
    </location>
</feature>
<feature type="mutagenesis site" description="Great increase in thermostability; when associated with F-219; V-238; S-293 and Y-294." evidence="8">
    <original>H</original>
    <variation>V</variation>
    <location>
        <position position="162"/>
    </location>
</feature>
<feature type="mutagenesis site" description="No effect on thermostability." evidence="2">
    <original>R</original>
    <variation>X</variation>
    <location>
        <position position="175"/>
    </location>
</feature>
<feature type="mutagenesis site" description="Loss of activity." evidence="2">
    <original>D</original>
    <variation>A</variation>
    <variation>C</variation>
    <variation>E</variation>
    <variation>H</variation>
    <variation>R</variation>
    <location>
        <position position="193"/>
    </location>
</feature>
<feature type="mutagenesis site" description="Increase in thermostability." evidence="2">
    <original>N</original>
    <variation>H</variation>
    <variation>K</variation>
    <location>
        <position position="201"/>
    </location>
</feature>
<feature type="mutagenesis site" description="Great increase in thermostability." evidence="2">
    <original>N</original>
    <variation>R</variation>
    <location>
        <position position="201"/>
    </location>
</feature>
<feature type="mutagenesis site" description="No effect on thermostability." evidence="2">
    <original>Q</original>
    <variation>X</variation>
    <location>
        <position position="207"/>
    </location>
</feature>
<feature type="mutagenesis site" description="Great increase in thermostability." evidence="2">
    <original>N</original>
    <variation>P</variation>
    <location>
        <position position="217"/>
    </location>
</feature>
<feature type="mutagenesis site" description="Great decrease in thermostability." evidence="2">
    <original>N</original>
    <variation>A</variation>
    <variation>E</variation>
    <variation>Q</variation>
    <variation>P</variation>
    <variation>S</variation>
    <location>
        <position position="219"/>
    </location>
</feature>
<feature type="mutagenesis site" description="Great increase in thermostability. Great increase in thermostability; when associated with V-162; V-238; S-293 and Y-294." evidence="2">
    <original>N</original>
    <variation>F</variation>
    <location>
        <position position="219"/>
    </location>
</feature>
<feature type="mutagenesis site" description="Increase in thermostability." evidence="2">
    <original>N</original>
    <variation>L</variation>
    <location>
        <position position="219"/>
    </location>
</feature>
<feature type="mutagenesis site" description="Great decrease in thermostability." evidence="2">
    <original>N</original>
    <variation>X</variation>
    <location>
        <position position="221"/>
    </location>
</feature>
<feature type="mutagenesis site" description="Great decrease in thermostability." evidence="2">
    <original>D</original>
    <variation>X</variation>
    <location>
        <position position="229"/>
    </location>
</feature>
<feature type="mutagenesis site" description="Great decrease in thermostability." evidence="2">
    <original>D</original>
    <variation>X</variation>
    <location>
        <position position="233"/>
    </location>
</feature>
<feature type="mutagenesis site" description="Increase in thermostability. Great increase in thermostability; when associated with V-162; F-219; S-293 and Y-294." evidence="10">
    <original>A</original>
    <variation>V</variation>
    <location>
        <position position="238"/>
    </location>
</feature>
<feature type="mutagenesis site" description="No effect on thermostability." evidence="8">
    <original>H</original>
    <variation>X</variation>
    <location>
        <position position="276"/>
    </location>
</feature>
<feature type="mutagenesis site" description="Decrease in activity; when associated with Y-315." evidence="6">
    <original>W</original>
    <variation>L</variation>
    <location>
        <position position="292"/>
    </location>
</feature>
<feature type="mutagenesis site" description="Increase in thermostability; when associated with Y-294. Great increase in thermostability; when associated with V-162; F-219; V-238 and Y-294." evidence="5">
    <original>Q</original>
    <variation>S</variation>
    <location>
        <position position="293"/>
    </location>
</feature>
<feature type="mutagenesis site" description="Increase in thermostability; when associated with S-293. Great increase in thermostability; when associated with V-162; F-219; V-238 and S-293." evidence="5">
    <original>N</original>
    <variation>Y</variation>
    <location>
        <position position="294"/>
    </location>
</feature>
<feature type="mutagenesis site" description="Loss of activity." evidence="2">
    <original>A</original>
    <variation>H</variation>
    <variation>K</variation>
    <variation>L</variation>
    <variation>Q</variation>
    <variation>R</variation>
    <location>
        <position position="298"/>
    </location>
</feature>
<feature type="mutagenesis site" description="No effect on thermostability." evidence="2">
    <original>E</original>
    <variation>X</variation>
    <location>
        <position position="300"/>
    </location>
</feature>
<feature type="mutagenesis site" description="Decrease in activity." evidence="6">
    <original>V</original>
    <variation>F</variation>
    <location>
        <position position="315"/>
    </location>
</feature>
<feature type="mutagenesis site" description="Increase in activity. Decrease in activity; when associated with L-292." evidence="6">
    <original>V</original>
    <variation>Y</variation>
    <location>
        <position position="315"/>
    </location>
</feature>
<feature type="mutagenesis site" description="No effect on thermostability." evidence="8">
    <original>H</original>
    <variation>X</variation>
    <location>
        <position position="322"/>
    </location>
</feature>
<feature type="mutagenesis site" description="No effect on thermostability." evidence="2">
    <original>Q</original>
    <variation>X</variation>
    <location>
        <position position="359"/>
    </location>
</feature>
<feature type="mutagenesis site" description="Loss of activity." evidence="2">
    <original>E</original>
    <variation>H</variation>
    <location>
        <position position="365"/>
    </location>
</feature>
<feature type="mutagenesis site" description="No effect on thermostability." evidence="8">
    <original>H</original>
    <variation>X</variation>
    <location>
        <position position="435"/>
    </location>
</feature>
<feature type="mutagenesis site" description="No effect on thermostability." evidence="8">
    <original>H</original>
    <variation>X</variation>
    <location>
        <position position="479"/>
    </location>
</feature>
<feature type="sequence conflict" description="In Ref. 4; no nucleotide entry." evidence="12" ref="4">
    <original>Q</original>
    <variation>H</variation>
    <location>
        <position position="4"/>
    </location>
</feature>
<feature type="sequence conflict" description="In Ref. 3; AAO26743 and 4; no nucleotide entry." evidence="12" ref="3 4">
    <original>T</original>
    <variation>P</variation>
    <location>
        <position position="13"/>
    </location>
</feature>
<feature type="sequence conflict" description="In Ref. 6; AAA22232." evidence="12" ref="6">
    <original>N</original>
    <variation>I</variation>
    <location>
        <position position="33"/>
    </location>
</feature>
<feature type="sequence conflict" description="In Ref. 8; AA sequence." evidence="12" ref="8">
    <original>Q</original>
    <variation>Y</variation>
    <location>
        <position position="38"/>
    </location>
</feature>
<feature type="sequence conflict" description="In Ref. 4; no nucleotide entry." evidence="12" ref="4">
    <original>G</original>
    <variation>R</variation>
    <location>
        <position position="48"/>
    </location>
</feature>
<feature type="sequence conflict" description="In Ref. 4; no nucleotide entry." evidence="12" ref="4">
    <original>AEH</original>
    <variation>VED</variation>
    <location>
        <begin position="62"/>
        <end position="64"/>
    </location>
</feature>
<feature type="sequence conflict" description="In Ref. 4; no nucleotide entry." evidence="12" ref="4">
    <original>AV</original>
    <variation>VA</variation>
    <location>
        <begin position="68"/>
        <end position="69"/>
    </location>
</feature>
<feature type="sequence conflict" description="In Ref. 4; no nucleotide entry." evidence="12" ref="4">
    <original>P</original>
    <variation>S</variation>
    <location>
        <position position="72"/>
    </location>
</feature>
<feature type="sequence conflict" description="In Ref. 3; AAO26743 and 4; no nucleotide entry." evidence="12" ref="3 4">
    <original>A</original>
    <variation>D</variation>
    <location>
        <position position="81"/>
    </location>
</feature>
<feature type="sequence conflict" description="In Ref. 4; no nucleotide entry." evidence="12" ref="4">
    <location>
        <begin position="105"/>
        <end position="117"/>
    </location>
</feature>
<feature type="sequence conflict" description="In Ref. 3; AAO26743." evidence="12" ref="3">
    <original>K</original>
    <variation>N</variation>
    <location>
        <position position="117"/>
    </location>
</feature>
<feature type="sequence conflict" description="In Ref. 3; AAO26743." evidence="12" ref="3">
    <original>I</original>
    <variation>T</variation>
    <location>
        <position position="158"/>
    </location>
</feature>
<feature type="sequence conflict" description="In Ref. 3; AAO26743." evidence="12" ref="3">
    <original>H</original>
    <variation>Q</variation>
    <location>
        <position position="162"/>
    </location>
</feature>
<feature type="sequence conflict" description="In Ref. 2; AAA22240." evidence="12" ref="2">
    <original>R</original>
    <variation>L</variation>
    <location>
        <position position="163"/>
    </location>
</feature>
<feature type="sequence conflict" description="In Ref. 3; AAO26743." evidence="12" ref="3">
    <original>H</original>
    <variation>Q</variation>
    <location>
        <position position="171"/>
    </location>
</feature>
<feature type="sequence conflict" description="In Ref. 3; AAO26743." evidence="12" ref="3">
    <original>E</original>
    <variation>V</variation>
    <location>
        <position position="218"/>
    </location>
</feature>
<feature type="sequence conflict" description="In Ref. 3; AAO26743." evidence="12" ref="3">
    <original>VA</original>
    <variation>AT</variation>
    <location>
        <begin position="237"/>
        <end position="238"/>
    </location>
</feature>
<feature type="sequence conflict" description="In Ref. 2; AAA22240 and 3; AAO26743." evidence="12" ref="2 3">
    <original>S</original>
    <variation>G</variation>
    <location>
        <position position="339"/>
    </location>
</feature>
<feature type="sequence conflict" description="In Ref. 3; AAO26743." evidence="12" ref="3">
    <original>L</original>
    <variation>V</variation>
    <location>
        <position position="347"/>
    </location>
</feature>
<feature type="sequence conflict" description="In Ref. 2; AAA22240." evidence="12" ref="2">
    <original>A</original>
    <variation>S</variation>
    <location>
        <position position="349"/>
    </location>
</feature>
<feature type="sequence conflict" description="In Ref. 3; AAO26743." evidence="12" ref="3">
    <original>S</original>
    <variation>A</variation>
    <location>
        <position position="385"/>
    </location>
</feature>
<feature type="sequence conflict" description="In Ref. 3; AAO26743." evidence="12" ref="3">
    <original>V</original>
    <variation>I</variation>
    <location>
        <position position="390"/>
    </location>
</feature>
<feature type="sequence conflict" description="In Ref. 3; AAO26743." evidence="12" ref="3">
    <original>D</original>
    <variation>A</variation>
    <location>
        <position position="401"/>
    </location>
</feature>
<feature type="sequence conflict" description="In Ref. 3; AAO26743." evidence="12" ref="3">
    <original>K</original>
    <variation>I</variation>
    <location>
        <position position="421"/>
    </location>
</feature>
<feature type="sequence conflict" description="In Ref. 3; AAO26743." evidence="12" ref="3">
    <original>A</original>
    <variation>T</variation>
    <location>
        <position position="464"/>
    </location>
</feature>
<feature type="sequence conflict" description="In Ref. 3; AAO26743." evidence="12" ref="3">
    <original>EP</original>
    <variation>DS</variation>
    <location>
        <begin position="487"/>
        <end position="488"/>
    </location>
</feature>
<feature type="sequence conflict" description="In Ref. 3; AAO26743." evidence="12" ref="3">
    <original>S</original>
    <variation>A</variation>
    <location>
        <position position="493"/>
    </location>
</feature>
<feature type="strand" evidence="17">
    <location>
        <begin position="36"/>
        <end position="38"/>
    </location>
</feature>
<feature type="strand" evidence="17">
    <location>
        <begin position="46"/>
        <end position="48"/>
    </location>
</feature>
<feature type="helix" evidence="17">
    <location>
        <begin position="50"/>
        <end position="56"/>
    </location>
</feature>
<feature type="helix" evidence="17">
    <location>
        <begin position="58"/>
        <end position="63"/>
    </location>
</feature>
<feature type="strand" evidence="17">
    <location>
        <begin position="68"/>
        <end position="70"/>
    </location>
</feature>
<feature type="strand" evidence="17">
    <location>
        <begin position="101"/>
        <end position="103"/>
    </location>
</feature>
<feature type="helix" evidence="17">
    <location>
        <begin position="109"/>
        <end position="121"/>
    </location>
</feature>
<feature type="strand" evidence="17">
    <location>
        <begin position="125"/>
        <end position="130"/>
    </location>
</feature>
<feature type="strand" evidence="17">
    <location>
        <begin position="133"/>
        <end position="135"/>
    </location>
</feature>
<feature type="strand" evidence="17">
    <location>
        <begin position="139"/>
        <end position="149"/>
    </location>
</feature>
<feature type="strand" evidence="17">
    <location>
        <begin position="151"/>
        <end position="153"/>
    </location>
</feature>
<feature type="strand" evidence="17">
    <location>
        <begin position="162"/>
        <end position="170"/>
    </location>
</feature>
<feature type="turn" evidence="17">
    <location>
        <begin position="173"/>
        <end position="177"/>
    </location>
</feature>
<feature type="helix" evidence="17">
    <location>
        <begin position="186"/>
        <end position="188"/>
    </location>
</feature>
<feature type="strand" evidence="17">
    <location>
        <begin position="189"/>
        <end position="193"/>
    </location>
</feature>
<feature type="turn" evidence="17">
    <location>
        <begin position="196"/>
        <end position="199"/>
    </location>
</feature>
<feature type="strand" evidence="17">
    <location>
        <begin position="204"/>
        <end position="206"/>
    </location>
</feature>
<feature type="turn" evidence="15">
    <location>
        <begin position="207"/>
        <end position="209"/>
    </location>
</feature>
<feature type="strand" evidence="16">
    <location>
        <begin position="213"/>
        <end position="215"/>
    </location>
</feature>
<feature type="helix" evidence="17">
    <location>
        <begin position="223"/>
        <end position="226"/>
    </location>
</feature>
<feature type="strand" evidence="17">
    <location>
        <begin position="228"/>
        <end position="230"/>
    </location>
</feature>
<feature type="helix" evidence="17">
    <location>
        <begin position="235"/>
        <end position="252"/>
    </location>
</feature>
<feature type="strand" evidence="17">
    <location>
        <begin position="256"/>
        <end position="259"/>
    </location>
</feature>
<feature type="helix" evidence="17">
    <location>
        <begin position="262"/>
        <end position="264"/>
    </location>
</feature>
<feature type="helix" evidence="17">
    <location>
        <begin position="267"/>
        <end position="281"/>
    </location>
</feature>
<feature type="strand" evidence="17">
    <location>
        <begin position="286"/>
        <end position="289"/>
    </location>
</feature>
<feature type="helix" evidence="17">
    <location>
        <begin position="296"/>
        <end position="305"/>
    </location>
</feature>
<feature type="turn" evidence="17">
    <location>
        <begin position="306"/>
        <end position="308"/>
    </location>
</feature>
<feature type="strand" evidence="17">
    <location>
        <begin position="310"/>
        <end position="313"/>
    </location>
</feature>
<feature type="helix" evidence="17">
    <location>
        <begin position="315"/>
        <end position="326"/>
    </location>
</feature>
<feature type="turn" evidence="17">
    <location>
        <begin position="327"/>
        <end position="329"/>
    </location>
</feature>
<feature type="helix" evidence="17">
    <location>
        <begin position="333"/>
        <end position="337"/>
    </location>
</feature>
<feature type="strand" evidence="17">
    <location>
        <begin position="338"/>
        <end position="340"/>
    </location>
</feature>
<feature type="helix" evidence="17">
    <location>
        <begin position="341"/>
        <end position="344"/>
    </location>
</feature>
<feature type="helix" evidence="17">
    <location>
        <begin position="346"/>
        <end position="348"/>
    </location>
</feature>
<feature type="strand" evidence="15">
    <location>
        <begin position="349"/>
        <end position="353"/>
    </location>
</feature>
<feature type="turn" evidence="17">
    <location>
        <begin position="356"/>
        <end position="358"/>
    </location>
</feature>
<feature type="turn" evidence="17">
    <location>
        <begin position="370"/>
        <end position="372"/>
    </location>
</feature>
<feature type="helix" evidence="17">
    <location>
        <begin position="373"/>
        <end position="382"/>
    </location>
</feature>
<feature type="strand" evidence="17">
    <location>
        <begin position="383"/>
        <end position="386"/>
    </location>
</feature>
<feature type="strand" evidence="17">
    <location>
        <begin position="389"/>
        <end position="391"/>
    </location>
</feature>
<feature type="helix" evidence="17">
    <location>
        <begin position="392"/>
        <end position="396"/>
    </location>
</feature>
<feature type="strand" evidence="17">
    <location>
        <begin position="401"/>
        <end position="404"/>
    </location>
</feature>
<feature type="helix" evidence="17">
    <location>
        <begin position="410"/>
        <end position="422"/>
    </location>
</feature>
<feature type="strand" evidence="17">
    <location>
        <begin position="428"/>
        <end position="431"/>
    </location>
</feature>
<feature type="strand" evidence="17">
    <location>
        <begin position="434"/>
        <end position="442"/>
    </location>
</feature>
<feature type="strand" evidence="17">
    <location>
        <begin position="453"/>
        <end position="460"/>
    </location>
</feature>
<feature type="strand" evidence="17">
    <location>
        <begin position="463"/>
        <end position="468"/>
    </location>
</feature>
<feature type="helix" evidence="17">
    <location>
        <begin position="471"/>
        <end position="473"/>
    </location>
</feature>
<feature type="strand" evidence="17">
    <location>
        <begin position="477"/>
        <end position="480"/>
    </location>
</feature>
<feature type="strand" evidence="17">
    <location>
        <begin position="495"/>
        <end position="501"/>
    </location>
</feature>
<feature type="strand" evidence="17">
    <location>
        <begin position="506"/>
        <end position="510"/>
    </location>
</feature>
<keyword id="KW-0002">3D-structure</keyword>
<keyword id="KW-0106">Calcium</keyword>
<keyword id="KW-0119">Carbohydrate metabolism</keyword>
<keyword id="KW-0903">Direct protein sequencing</keyword>
<keyword id="KW-0326">Glycosidase</keyword>
<keyword id="KW-0378">Hydrolase</keyword>
<keyword id="KW-0479">Metal-binding</keyword>
<keyword id="KW-0964">Secreted</keyword>
<keyword id="KW-0732">Signal</keyword>
<protein>
    <recommendedName>
        <fullName>Alpha-amylase</fullName>
        <ecNumber evidence="3 6 7">3.2.1.1</ecNumber>
    </recommendedName>
    <alternativeName>
        <fullName>1,4-alpha-D-glucan glucanohydrolase</fullName>
    </alternativeName>
    <alternativeName>
        <fullName>BLA</fullName>
    </alternativeName>
</protein>
<accession>P06278</accession>
<accession>Q45283</accession>
<accession>Q84I71</accession>
<dbReference type="EC" id="3.2.1.1" evidence="3 6 7"/>
<dbReference type="EMBL" id="X03236">
    <property type="protein sequence ID" value="CAA26981.1"/>
    <property type="molecule type" value="Genomic_DNA"/>
</dbReference>
<dbReference type="EMBL" id="M38570">
    <property type="protein sequence ID" value="AAA22226.1"/>
    <property type="molecule type" value="Genomic_DNA"/>
</dbReference>
<dbReference type="EMBL" id="M13256">
    <property type="protein sequence ID" value="AAA22240.1"/>
    <property type="molecule type" value="Genomic_DNA"/>
</dbReference>
<dbReference type="EMBL" id="AF438149">
    <property type="protein sequence ID" value="AAO26743.1"/>
    <property type="molecule type" value="Genomic_DNA"/>
</dbReference>
<dbReference type="EMBL" id="K01984">
    <property type="protein sequence ID" value="AAA22193.1"/>
    <property type="molecule type" value="Genomic_DNA"/>
</dbReference>
<dbReference type="EMBL" id="M62637">
    <property type="protein sequence ID" value="AAA22232.1"/>
    <property type="molecule type" value="Genomic_DNA"/>
</dbReference>
<dbReference type="EMBL" id="M26412">
    <property type="protein sequence ID" value="AAA22237.1"/>
    <property type="molecule type" value="Genomic_DNA"/>
</dbReference>
<dbReference type="PIR" id="A91997">
    <property type="entry name" value="ALBSL"/>
</dbReference>
<dbReference type="RefSeq" id="WP_017474613.1">
    <property type="nucleotide sequence ID" value="NZ_UAQA01000026.1"/>
</dbReference>
<dbReference type="RefSeq" id="WP_025807921.1">
    <property type="nucleotide sequence ID" value="NZ_BOQW01000006.1"/>
</dbReference>
<dbReference type="PDB" id="1BLI">
    <property type="method" value="X-ray"/>
    <property type="resolution" value="1.90 A"/>
    <property type="chains" value="A=30-512"/>
</dbReference>
<dbReference type="PDB" id="1BPL">
    <property type="method" value="X-ray"/>
    <property type="resolution" value="2.20 A"/>
    <property type="chains" value="A=30-218, B=219-512"/>
</dbReference>
<dbReference type="PDB" id="1E3X">
    <property type="method" value="X-ray"/>
    <property type="resolution" value="1.90 A"/>
    <property type="chains" value="A=330-512"/>
</dbReference>
<dbReference type="PDB" id="1E3Z">
    <property type="method" value="X-ray"/>
    <property type="resolution" value="1.93 A"/>
    <property type="chains" value="A=330-512"/>
</dbReference>
<dbReference type="PDB" id="1E40">
    <property type="method" value="X-ray"/>
    <property type="resolution" value="2.20 A"/>
    <property type="chains" value="A=330-512"/>
</dbReference>
<dbReference type="PDB" id="1E43">
    <property type="method" value="X-ray"/>
    <property type="resolution" value="1.70 A"/>
    <property type="chains" value="A=330-512"/>
</dbReference>
<dbReference type="PDB" id="1OB0">
    <property type="method" value="X-ray"/>
    <property type="resolution" value="1.83 A"/>
    <property type="chains" value="A=30-512"/>
</dbReference>
<dbReference type="PDB" id="1VJS">
    <property type="method" value="X-ray"/>
    <property type="resolution" value="1.70 A"/>
    <property type="chains" value="A=30-512"/>
</dbReference>
<dbReference type="PDBsum" id="1BLI"/>
<dbReference type="PDBsum" id="1BPL"/>
<dbReference type="PDBsum" id="1E3X"/>
<dbReference type="PDBsum" id="1E3Z"/>
<dbReference type="PDBsum" id="1E40"/>
<dbReference type="PDBsum" id="1E43"/>
<dbReference type="PDBsum" id="1OB0"/>
<dbReference type="PDBsum" id="1VJS"/>
<dbReference type="PCDDB" id="P06278"/>
<dbReference type="SMR" id="P06278"/>
<dbReference type="BindingDB" id="P06278"/>
<dbReference type="ChEMBL" id="CHEMBL4215"/>
<dbReference type="Allergome" id="8255">
    <property type="allergen name" value="Bac li aA"/>
</dbReference>
<dbReference type="CAZy" id="GH13">
    <property type="family name" value="Glycoside Hydrolase Family 13"/>
</dbReference>
<dbReference type="BRENDA" id="3.2.1.1">
    <property type="organism ID" value="669"/>
</dbReference>
<dbReference type="EvolutionaryTrace" id="P06278"/>
<dbReference type="GO" id="GO:0005576">
    <property type="term" value="C:extracellular region"/>
    <property type="evidence" value="ECO:0007669"/>
    <property type="project" value="UniProtKB-SubCell"/>
</dbReference>
<dbReference type="GO" id="GO:0004556">
    <property type="term" value="F:alpha-amylase activity"/>
    <property type="evidence" value="ECO:0000314"/>
    <property type="project" value="CACAO"/>
</dbReference>
<dbReference type="GO" id="GO:0005509">
    <property type="term" value="F:calcium ion binding"/>
    <property type="evidence" value="ECO:0007669"/>
    <property type="project" value="InterPro"/>
</dbReference>
<dbReference type="GO" id="GO:0005975">
    <property type="term" value="P:carbohydrate metabolic process"/>
    <property type="evidence" value="ECO:0007669"/>
    <property type="project" value="InterPro"/>
</dbReference>
<dbReference type="CDD" id="cd11318">
    <property type="entry name" value="AmyAc_bac_fung_AmyA"/>
    <property type="match status" value="1"/>
</dbReference>
<dbReference type="FunFam" id="2.40.30.140:FF:000002">
    <property type="entry name" value="Alpha-amylase"/>
    <property type="match status" value="1"/>
</dbReference>
<dbReference type="Gene3D" id="2.40.30.140">
    <property type="match status" value="1"/>
</dbReference>
<dbReference type="Gene3D" id="3.20.20.80">
    <property type="entry name" value="Glycosidases"/>
    <property type="match status" value="1"/>
</dbReference>
<dbReference type="Gene3D" id="2.60.40.1180">
    <property type="entry name" value="Golgi alpha-mannosidase II"/>
    <property type="match status" value="1"/>
</dbReference>
<dbReference type="InterPro" id="IPR013776">
    <property type="entry name" value="A-amylase_thermo"/>
</dbReference>
<dbReference type="InterPro" id="IPR015237">
    <property type="entry name" value="Alpha-amylase_C_pro"/>
</dbReference>
<dbReference type="InterPro" id="IPR006047">
    <property type="entry name" value="Glyco_hydro_13_cat_dom"/>
</dbReference>
<dbReference type="InterPro" id="IPR013780">
    <property type="entry name" value="Glyco_hydro_b"/>
</dbReference>
<dbReference type="InterPro" id="IPR017853">
    <property type="entry name" value="Glycoside_hydrolase_SF"/>
</dbReference>
<dbReference type="NCBIfam" id="NF006968">
    <property type="entry name" value="PRK09441.1-1"/>
    <property type="match status" value="1"/>
</dbReference>
<dbReference type="NCBIfam" id="NF006969">
    <property type="entry name" value="PRK09441.1-2"/>
    <property type="match status" value="1"/>
</dbReference>
<dbReference type="NCBIfam" id="NF006972">
    <property type="entry name" value="PRK09441.1-5"/>
    <property type="match status" value="1"/>
</dbReference>
<dbReference type="PANTHER" id="PTHR43447">
    <property type="entry name" value="ALPHA-AMYLASE"/>
    <property type="match status" value="1"/>
</dbReference>
<dbReference type="Pfam" id="PF09154">
    <property type="entry name" value="Alpha-amy_C_pro"/>
    <property type="match status" value="1"/>
</dbReference>
<dbReference type="Pfam" id="PF00128">
    <property type="entry name" value="Alpha-amylase"/>
    <property type="match status" value="1"/>
</dbReference>
<dbReference type="PIRSF" id="PIRSF001021">
    <property type="entry name" value="Alph-amls_thrmst"/>
    <property type="match status" value="1"/>
</dbReference>
<dbReference type="SMART" id="SM00642">
    <property type="entry name" value="Aamy"/>
    <property type="match status" value="1"/>
</dbReference>
<dbReference type="SUPFAM" id="SSF51445">
    <property type="entry name" value="(Trans)glycosidases"/>
    <property type="match status" value="1"/>
</dbReference>
<dbReference type="SUPFAM" id="SSF51011">
    <property type="entry name" value="Glycosyl hydrolase domain"/>
    <property type="match status" value="1"/>
</dbReference>
<organism>
    <name type="scientific">Bacillus licheniformis</name>
    <dbReference type="NCBI Taxonomy" id="1402"/>
    <lineage>
        <taxon>Bacteria</taxon>
        <taxon>Bacillati</taxon>
        <taxon>Bacillota</taxon>
        <taxon>Bacilli</taxon>
        <taxon>Bacillales</taxon>
        <taxon>Bacillaceae</taxon>
        <taxon>Bacillus</taxon>
    </lineage>
</organism>
<proteinExistence type="evidence at protein level"/>
<gene>
    <name type="primary">amyS</name>
    <name type="synonym">amyL</name>
</gene>
<sequence length="512" mass="58549">MKQQKRLYARLLTLLFALIFLLPHSAAAAANLNGTLMQYFEWYMPNDGQHWKRLQNDSAYLAEHGITAVWIPPAYKGTSQADVGYGAYDLYDLGEFHQKGTVRTKYGTKGELQSAIKSLHSRDINVYGDVVINHKGGADATEDVTAVEVDPADRNRVISGEHRIKAWTHFHFPGRGSTYSDFKWHWYHFDGTDWDESRKLNRIYKFQGKAWDWEVSNENGNYDYLMYADIDYDHPDVAAEIKRWGTWYANELQLDGFRLDAVKHIKFSFLRDWVNHVREKTGKEMFTVAEYWQNDLGALENYLNKTNFNHSVFDVPLHYQFHAASTQGGGYDMRKLLNSTVVSKHPLKAVTFVDNHDTQPGQSLESTVQTWFKPLAYAFILTRESGYPQVFYGDMYGTKGDSQREIPALKHKIEPILKARKQYAYGAQHDYFDHHDIVGWTREGDSSVANSGLAALITDGPGGAKRMYVGRQNAGETWHDITGNRSEPVVINSEGWGEFHVNGGSVSIYVQR</sequence>
<evidence type="ECO:0000250" key="1"/>
<evidence type="ECO:0000269" key="2">
    <source>
    </source>
</evidence>
<evidence type="ECO:0000269" key="3">
    <source>
    </source>
</evidence>
<evidence type="ECO:0000269" key="4">
    <source>
    </source>
</evidence>
<evidence type="ECO:0000269" key="5">
    <source>
    </source>
</evidence>
<evidence type="ECO:0000269" key="6">
    <source>
    </source>
</evidence>
<evidence type="ECO:0000269" key="7">
    <source>
    </source>
</evidence>
<evidence type="ECO:0000269" key="8">
    <source>
    </source>
</evidence>
<evidence type="ECO:0000269" key="9">
    <source>
    </source>
</evidence>
<evidence type="ECO:0000269" key="10">
    <source>
    </source>
</evidence>
<evidence type="ECO:0000269" key="11">
    <source>
    </source>
</evidence>
<evidence type="ECO:0000305" key="12"/>
<evidence type="ECO:0007744" key="13">
    <source>
        <dbReference type="PDB" id="1BLI"/>
    </source>
</evidence>
<evidence type="ECO:0007744" key="14">
    <source>
        <dbReference type="PDB" id="1OB0"/>
    </source>
</evidence>
<evidence type="ECO:0007829" key="15">
    <source>
        <dbReference type="PDB" id="1BPL"/>
    </source>
</evidence>
<evidence type="ECO:0007829" key="16">
    <source>
        <dbReference type="PDB" id="1OB0"/>
    </source>
</evidence>
<evidence type="ECO:0007829" key="17">
    <source>
        <dbReference type="PDB" id="1VJS"/>
    </source>
</evidence>
<comment type="catalytic activity">
    <reaction evidence="3 6 7">
        <text>Endohydrolysis of (1-&gt;4)-alpha-D-glucosidic linkages in polysaccharides containing three or more (1-&gt;4)-alpha-linked D-glucose units.</text>
        <dbReference type="EC" id="3.2.1.1"/>
    </reaction>
</comment>
<comment type="cofactor">
    <cofactor evidence="4 11">
        <name>Ca(2+)</name>
        <dbReference type="ChEBI" id="CHEBI:29108"/>
    </cofactor>
    <text evidence="4 11">Binds 3 Ca(2+) ions per subunit.</text>
</comment>
<comment type="cofactor">
    <cofactor evidence="4 11">
        <name>Na(+)</name>
        <dbReference type="ChEBI" id="CHEBI:29101"/>
    </cofactor>
    <text evidence="4 11">Binds 1 sodium ion per subunit.</text>
</comment>
<comment type="biophysicochemical properties">
    <phDependence>
        <text>Active up to pH 11.</text>
    </phDependence>
    <temperatureDependence>
        <text>Active up to 100 degrees Celsius.</text>
    </temperatureDependence>
</comment>
<comment type="subunit">
    <text>Monomer.</text>
</comment>
<comment type="subcellular location">
    <subcellularLocation>
        <location evidence="7">Secreted</location>
    </subcellularLocation>
</comment>
<comment type="biotechnology">
    <text>Used in the food industry for high temperature liquefaction of starch-containing mashes and in the detergent industry to remove starch. Sold under the name Termamyl by Novozymes.</text>
</comment>
<comment type="similarity">
    <text evidence="12">Belongs to the glycosyl hydrolase 13 family.</text>
</comment>
<reference key="1">
    <citation type="journal article" date="1985" name="J. Biochem.">
        <title>Complete nucleotide sequence of a gene coding for heat- and pH-stable alpha-amylase of Bacillus licheniformis: comparison of the amino acid sequences of three bacterial liquefying alpha-amylases deduced from the DNA sequences.</title>
        <authorList>
            <person name="Yuuki T."/>
            <person name="Nomura T."/>
            <person name="Tezuka H."/>
            <person name="Tsuboi A."/>
            <person name="Yamagata H."/>
            <person name="Tsukagoshi N."/>
            <person name="Udaka S."/>
        </authorList>
    </citation>
    <scope>NUCLEOTIDE SEQUENCE [GENOMIC DNA]</scope>
    <source>
        <strain>ATCC 27811 / BCRC 10494 / FERM P-1038</strain>
    </source>
</reference>
<reference key="2">
    <citation type="journal article" date="1986" name="J. Bacteriol.">
        <title>Structural genes encoding the thermophilic alpha-amylases of Bacillus stearothermophilus and Bacillus licheniformis.</title>
        <authorList>
            <person name="Gray G.L."/>
            <person name="Mainzer S.E."/>
            <person name="Rey M.W."/>
            <person name="Lamsa M.H."/>
            <person name="Kindle K.L."/>
            <person name="Carmona C."/>
            <person name="Requadt C."/>
        </authorList>
    </citation>
    <scope>NUCLEOTIDE SEQUENCE [GENOMIC DNA]</scope>
</reference>
<reference key="3">
    <citation type="journal article" date="2003" name="J. Appl. Microbiol.">
        <title>Expression and secretion of an alpha-amylase gene from a native strain of Bacillus licheniformis in Escherichia coli by T7 promoter and putative signal peptide of the gene.</title>
        <authorList>
            <person name="Shahhoseini M."/>
            <person name="Ziaee A.A."/>
            <person name="Ghaemi N."/>
        </authorList>
    </citation>
    <scope>NUCLEOTIDE SEQUENCE [GENOMIC DNA]</scope>
    <scope>CATALYTIC ACTIVITY</scope>
    <scope>SUBCELLULAR LOCATION</scope>
</reference>
<reference key="4">
    <citation type="journal article" date="1984" name="Eur. J. Biochem.">
        <title>Isolation and the 5'-end nucleotide sequence of Bacillus licheniformis alpha-amylase gene.</title>
        <authorList>
            <person name="Sibakov M."/>
            <person name="Palva I."/>
        </authorList>
    </citation>
    <scope>NUCLEOTIDE SEQUENCE [GENOMIC DNA] OF 1-121</scope>
    <source>
        <strain>ATCC 14580 / DSM 13 / NBRC 12200 / NCIMB 9375 / NCTC 10341 / Gibson 46</strain>
    </source>
</reference>
<reference key="5">
    <citation type="journal article" date="1984" name="J. Bacteriol.">
        <title>Nucleotide sequence of the 5' region of the Bacillus licheniformis alpha-amylase gene: comparison with the B. amyloliquefaciens gene.</title>
        <authorList>
            <person name="Stephens M.A."/>
            <person name="Ortlepp S.A."/>
            <person name="Ollington J.F."/>
            <person name="McConnell D.J."/>
        </authorList>
    </citation>
    <scope>NUCLEOTIDE SEQUENCE [GENOMIC DNA] OF 1-104</scope>
</reference>
<reference key="6">
    <citation type="journal article" date="1990" name="Gene">
        <title>In vivo genetic engineering: homologous recombination as a tool for plasmid construction.</title>
        <authorList>
            <person name="Jorgensen L."/>
            <person name="Hansen C.K."/>
            <person name="Poulsen G.B."/>
            <person name="Diderichsen B."/>
        </authorList>
    </citation>
    <scope>NUCLEOTIDE SEQUENCE [GENOMIC DNA] OF 1-33</scope>
</reference>
<reference key="7">
    <citation type="journal article" date="1989" name="J. Bacteriol.">
        <title>Bacillus licheniformis alpha-amylase gene, amyL, is subject to promoter-independent catabolite repression in Bacillus subtilis.</title>
        <authorList>
            <person name="Laoide B.M."/>
            <person name="Chambliss G.H."/>
            <person name="McConnell D.J."/>
        </authorList>
    </citation>
    <scope>NUCLEOTIDE SEQUENCE [GENOMIC DNA] OF 1-29</scope>
</reference>
<reference key="8">
    <citation type="journal article" date="1982" name="J. Bacteriol.">
        <title>N-terminal amino acid sequence of Bacillus licheniformis alpha-amylase: comparison with Bacillus amyloliquefaciens and Bacillus subtilis enzymes.</title>
        <authorList>
            <person name="Kuhn H."/>
            <person name="Fietzek P.P."/>
            <person name="Lampen J.O."/>
        </authorList>
    </citation>
    <scope>PROTEIN SEQUENCE OF 30-47</scope>
</reference>
<reference key="9">
    <citation type="journal article" date="2002" name="FEBS Lett.">
        <title>Action pattern and subsite mapping of Bacillus licheniformis alpha-amylase (BLA) with modified maltooligosaccharide substrates.</title>
        <authorList>
            <person name="Kandra L."/>
            <person name="Gyemant G."/>
            <person name="Remenyik J."/>
            <person name="Hovanszki G."/>
            <person name="Liptak A."/>
        </authorList>
    </citation>
    <scope>MAPPING OF SUBSTRATE-BINDING SITE</scope>
    <scope>CATALYTIC ACTIVITY</scope>
</reference>
<reference key="10">
    <citation type="journal article" date="1990" name="J. Biol. Chem.">
        <title>Use of amber suppressors to investigate the thermostability of Bacillus licheniformis alpha-amylase. Amino acid replacements at 6 histidine residues reveal a critical position at His-133.</title>
        <authorList>
            <person name="Declerck N."/>
            <person name="Joyet P."/>
            <person name="Gaillardin C."/>
            <person name="Masson J.-M."/>
        </authorList>
    </citation>
    <scope>MUTAGENESIS OF HIS-64; HIS-162; HIS-276; HIS-322; HIS-435 AND HIS-479</scope>
    <source>
        <strain>ATCC 6598 / NRS 745</strain>
    </source>
</reference>
<reference key="11">
    <citation type="journal article" date="1995" name="Protein Eng.">
        <title>Hyperthermostable mutants of Bacillus licheniformis alpha-amylase: multiple amino acid replacements and molecular modelling.</title>
        <authorList>
            <person name="Declerck N."/>
            <person name="Joyet P."/>
            <person name="Trosset J.Y."/>
            <person name="Garnier J."/>
            <person name="Gaillardin C."/>
        </authorList>
    </citation>
    <scope>MUTAGENESIS OF ALA-238</scope>
    <source>
        <strain>ATCC 6598 / NRS 745</strain>
    </source>
</reference>
<reference key="12">
    <citation type="journal article" date="2000" name="J. Mol. Biol.">
        <title>Probing structural determinants specifying high thermostability in Bacillus licheniformis alpha-amylase.</title>
        <authorList>
            <person name="Declerck N."/>
            <person name="Machius M."/>
            <person name="Wiegand G."/>
            <person name="Huber R."/>
            <person name="Gaillardin C."/>
        </authorList>
    </citation>
    <scope>MUTAGENESIS OF ASP-150; ASN-155; ARG-175; ASP-193; ASN-201; GLN-207; ASN-217; ASN-219; ASN-221; ASP-229; ASP-233; ALA-298; GLU-300; GLN-359 AND GLU-365</scope>
    <source>
        <strain>ATCC 6598 / NRS 745</strain>
    </source>
</reference>
<reference key="13">
    <citation type="journal article" date="2003" name="Protein Eng.">
        <title>Hyperthermostabilization of Bacillus licheniformis alpha-amylase and modulation of its stability over a 50 degrees C temperature range.</title>
        <authorList>
            <person name="Declerck N."/>
            <person name="Machius M."/>
            <person name="Joyet P."/>
            <person name="Wiegand G."/>
            <person name="Huber R."/>
            <person name="Gaillardin C."/>
        </authorList>
    </citation>
    <scope>MUTAGENESIS OF GLN-293 AND ASN-294</scope>
    <source>
        <strain>ATCC 6598 / NRS 745</strain>
    </source>
</reference>
<reference key="14">
    <citation type="journal article" date="2003" name="Protein Eng.">
        <title>Alpha-amylase from Bacillus licheniformis mutants near to the catalytic site: effects on hydrolytic and transglycosylation activity.</title>
        <authorList>
            <person name="Rivera M.H."/>
            <person name="Lopez-Munguia A."/>
            <person name="Soberon X."/>
            <person name="Saab-Rincon G."/>
        </authorList>
    </citation>
    <scope>CATALYTIC ACTIVITY</scope>
    <scope>MUTAGENESIS OF TRP-292 AND VAL-315</scope>
    <source>
        <strain>ATCC 27811 / BCRC 10494 / FERM P-1038</strain>
    </source>
</reference>
<reference key="15">
    <citation type="journal article" date="1995" name="J. Mol. Biol.">
        <title>Crystal structure of calcium-depleted Bacillus licheniformis alpha-amylase at 2.2-A resolution.</title>
        <authorList>
            <person name="Machius M."/>
            <person name="Wiegand G."/>
            <person name="Huber R."/>
        </authorList>
    </citation>
    <scope>X-RAY CRYSTALLOGRAPHY (2.2 ANGSTROMS) OF 30-512</scope>
    <source>
        <strain>ATCC 27811 / BCRC 10494 / FERM P-1038</strain>
    </source>
</reference>
<reference key="16">
    <citation type="journal article" date="1998" name="Structure">
        <title>Activation of Bacillus licheniformis alpha-amylase through a disorder--&gt;order transition of the substrate-binding site mediated by a calcium-sodium-calcium metal triad.</title>
        <authorList>
            <person name="Machius M."/>
            <person name="Declerck N."/>
            <person name="Huber R."/>
            <person name="Wiegand G."/>
        </authorList>
    </citation>
    <scope>X-RAY CRYSTALLOGRAPHY (1.90 ANGSTROMS) OF 30-512 IN COMPLEX WITH CALCIUM AND SODIUM</scope>
    <scope>COFACTOR</scope>
</reference>
<reference key="17">
    <citation type="journal article" date="2000" name="Biochemistry">
        <title>Structural analysis of a chimeric bacterial alpha-amylase. High-resolution analysis of native and ligand complexes.</title>
        <authorList>
            <person name="Brzozowski A.M."/>
            <person name="Lawson D.M."/>
            <person name="Turkenburg J.P."/>
            <person name="Bisgaard-Frantzen H."/>
            <person name="Svendsen A."/>
            <person name="Borchert T.V."/>
            <person name="Dauter Z."/>
            <person name="Wilson K.S."/>
            <person name="Davies G.J."/>
        </authorList>
    </citation>
    <scope>X-RAY CRYSTALLOGRAPHY (1.9 ANGSTROMS) OF 330-512</scope>
</reference>
<reference key="18">
    <citation type="journal article" date="2003" name="J. Biol. Chem.">
        <title>Kinetic stabilization of Bacillus licheniformis alpha-amylase through introduction of hydrophobic residues at the surface.</title>
        <authorList>
            <person name="Machius M."/>
            <person name="Declerck N."/>
            <person name="Huber R."/>
            <person name="Wiegand G."/>
        </authorList>
    </citation>
    <scope>X-RAY CRYSTALLOGRAPHY (1.83 ANGSTROMS) OF 30-512 OF MUTANT VAL-162/PHE-219/VAL-238/SER-293/TYR-294 IN COMPLEX WITH CALCIUM AND SODIUM</scope>
    <scope>COFACTOR</scope>
    <source>
        <strain>ATCC 6598 / NRS 745</strain>
    </source>
</reference>